<evidence type="ECO:0000255" key="1">
    <source>
        <dbReference type="HAMAP-Rule" id="MF_01435"/>
    </source>
</evidence>
<evidence type="ECO:0000255" key="2">
    <source>
        <dbReference type="PROSITE-ProRule" id="PRU01323"/>
    </source>
</evidence>
<reference key="1">
    <citation type="journal article" date="2001" name="Nature">
        <title>Complete genome sequence of a multiple drug resistant Salmonella enterica serovar Typhi CT18.</title>
        <authorList>
            <person name="Parkhill J."/>
            <person name="Dougan G."/>
            <person name="James K.D."/>
            <person name="Thomson N.R."/>
            <person name="Pickard D."/>
            <person name="Wain J."/>
            <person name="Churcher C.M."/>
            <person name="Mungall K.L."/>
            <person name="Bentley S.D."/>
            <person name="Holden M.T.G."/>
            <person name="Sebaihia M."/>
            <person name="Baker S."/>
            <person name="Basham D."/>
            <person name="Brooks K."/>
            <person name="Chillingworth T."/>
            <person name="Connerton P."/>
            <person name="Cronin A."/>
            <person name="Davis P."/>
            <person name="Davies R.M."/>
            <person name="Dowd L."/>
            <person name="White N."/>
            <person name="Farrar J."/>
            <person name="Feltwell T."/>
            <person name="Hamlin N."/>
            <person name="Haque A."/>
            <person name="Hien T.T."/>
            <person name="Holroyd S."/>
            <person name="Jagels K."/>
            <person name="Krogh A."/>
            <person name="Larsen T.S."/>
            <person name="Leather S."/>
            <person name="Moule S."/>
            <person name="O'Gaora P."/>
            <person name="Parry C."/>
            <person name="Quail M.A."/>
            <person name="Rutherford K.M."/>
            <person name="Simmonds M."/>
            <person name="Skelton J."/>
            <person name="Stevens K."/>
            <person name="Whitehead S."/>
            <person name="Barrell B.G."/>
        </authorList>
    </citation>
    <scope>NUCLEOTIDE SEQUENCE [LARGE SCALE GENOMIC DNA]</scope>
    <source>
        <strain>CT18</strain>
    </source>
</reference>
<reference key="2">
    <citation type="journal article" date="2003" name="J. Bacteriol.">
        <title>Comparative genomics of Salmonella enterica serovar Typhi strains Ty2 and CT18.</title>
        <authorList>
            <person name="Deng W."/>
            <person name="Liou S.-R."/>
            <person name="Plunkett G. III"/>
            <person name="Mayhew G.F."/>
            <person name="Rose D.J."/>
            <person name="Burland V."/>
            <person name="Kodoyianni V."/>
            <person name="Schwartz D.C."/>
            <person name="Blattner F.R."/>
        </authorList>
    </citation>
    <scope>NUCLEOTIDE SEQUENCE [LARGE SCALE GENOMIC DNA]</scope>
    <source>
        <strain>ATCC 700931 / Ty2</strain>
    </source>
</reference>
<feature type="signal peptide" evidence="1">
    <location>
        <begin position="1"/>
        <end position="21"/>
    </location>
</feature>
<feature type="chain" id="PRO_0000045952" description="Protein YebF">
    <location>
        <begin position="22"/>
        <end position="117"/>
    </location>
</feature>
<feature type="domain" description="YebF/Cmi" evidence="2">
    <location>
        <begin position="30"/>
        <end position="117"/>
    </location>
</feature>
<feature type="disulfide bond" evidence="2">
    <location>
        <begin position="34"/>
        <end position="107"/>
    </location>
</feature>
<dbReference type="EMBL" id="AL513382">
    <property type="protein sequence ID" value="CAD05632.1"/>
    <property type="molecule type" value="Genomic_DNA"/>
</dbReference>
<dbReference type="EMBL" id="AE014613">
    <property type="protein sequence ID" value="AAO68668.1"/>
    <property type="molecule type" value="Genomic_DNA"/>
</dbReference>
<dbReference type="RefSeq" id="NP_456449.1">
    <property type="nucleotide sequence ID" value="NC_003198.1"/>
</dbReference>
<dbReference type="RefSeq" id="WP_001042123.1">
    <property type="nucleotide sequence ID" value="NZ_WSUR01000004.1"/>
</dbReference>
<dbReference type="SMR" id="Q8Z5X5"/>
<dbReference type="STRING" id="220341.gene:17585997"/>
<dbReference type="KEGG" id="stt:t0996"/>
<dbReference type="KEGG" id="sty:STY2087"/>
<dbReference type="PATRIC" id="fig|220341.7.peg.2099"/>
<dbReference type="eggNOG" id="ENOG5031MN2">
    <property type="taxonomic scope" value="Bacteria"/>
</dbReference>
<dbReference type="HOGENOM" id="CLU_161319_1_0_6"/>
<dbReference type="OMA" id="FPKCEGM"/>
<dbReference type="OrthoDB" id="6454940at2"/>
<dbReference type="Proteomes" id="UP000000541">
    <property type="component" value="Chromosome"/>
</dbReference>
<dbReference type="Proteomes" id="UP000002670">
    <property type="component" value="Chromosome"/>
</dbReference>
<dbReference type="GO" id="GO:0005576">
    <property type="term" value="C:extracellular region"/>
    <property type="evidence" value="ECO:0007669"/>
    <property type="project" value="UniProtKB-SubCell"/>
</dbReference>
<dbReference type="Gene3D" id="3.10.450.300">
    <property type="entry name" value="YebF/Colicin-M immunity protein"/>
    <property type="match status" value="1"/>
</dbReference>
<dbReference type="HAMAP" id="MF_01435">
    <property type="entry name" value="YebF"/>
    <property type="match status" value="1"/>
</dbReference>
<dbReference type="InterPro" id="IPR020236">
    <property type="entry name" value="Uncharacterised_YebF"/>
</dbReference>
<dbReference type="InterPro" id="IPR038703">
    <property type="entry name" value="YebF/Cmi_sf"/>
</dbReference>
<dbReference type="InterPro" id="IPR025603">
    <property type="entry name" value="YebF/ColM_immunity"/>
</dbReference>
<dbReference type="NCBIfam" id="NF010224">
    <property type="entry name" value="PRK13680.1"/>
    <property type="match status" value="1"/>
</dbReference>
<dbReference type="NCBIfam" id="NF041240">
    <property type="entry name" value="YebF_not_Cmi"/>
    <property type="match status" value="1"/>
</dbReference>
<dbReference type="Pfam" id="PF13995">
    <property type="entry name" value="YebF"/>
    <property type="match status" value="1"/>
</dbReference>
<dbReference type="PROSITE" id="PS51979">
    <property type="entry name" value="YEBF_CMI"/>
    <property type="match status" value="1"/>
</dbReference>
<comment type="subcellular location">
    <subcellularLocation>
        <location evidence="1">Secreted</location>
    </subcellularLocation>
</comment>
<comment type="similarity">
    <text evidence="1">Belongs to the YebF family.</text>
</comment>
<name>YEBF_SALTI</name>
<sequence length="117" mass="12774">MNKRGALLSLLLLSASVSAFAASTESKSVKFPQCEGLDAAGIAASVKRDYQQNRIVRWADDQKKVGQADPVAWVNVQDVVGQNDKWTVPLTVRGKSADIHYQVIVDCKAGKAEYKPR</sequence>
<gene>
    <name evidence="1" type="primary">yebF</name>
    <name type="ordered locus">STY2087</name>
    <name type="ordered locus">t0996</name>
</gene>
<accession>Q8Z5X5</accession>
<accession>Q7CAK0</accession>
<proteinExistence type="inferred from homology"/>
<keyword id="KW-1015">Disulfide bond</keyword>
<keyword id="KW-0964">Secreted</keyword>
<keyword id="KW-0732">Signal</keyword>
<organism>
    <name type="scientific">Salmonella typhi</name>
    <dbReference type="NCBI Taxonomy" id="90370"/>
    <lineage>
        <taxon>Bacteria</taxon>
        <taxon>Pseudomonadati</taxon>
        <taxon>Pseudomonadota</taxon>
        <taxon>Gammaproteobacteria</taxon>
        <taxon>Enterobacterales</taxon>
        <taxon>Enterobacteriaceae</taxon>
        <taxon>Salmonella</taxon>
    </lineage>
</organism>
<protein>
    <recommendedName>
        <fullName evidence="1">Protein YebF</fullName>
    </recommendedName>
</protein>